<gene>
    <name evidence="1" type="primary">astE</name>
    <name type="ordered locus">VIBHAR_02131</name>
</gene>
<accession>A7MVW7</accession>
<proteinExistence type="inferred from homology"/>
<sequence>MTKSLFRQSFLTDTLDVHIDVAPAEQVLSNGVKLKLYQRGVLEVIPEEYTQETKNVIISCGVHGDETAPMELVDSIIKDIESGFQKVEARCLFIIAHPESTLAHSRFLEENLNRLFDEKEHEPTKELAIADTLKLLVRDFYQDTAAETRWHLDLHCAIRASKHYTFAVSPKTRHPVRSKALIDFLDSAHIEAVLLSNSPTSTFSWFSAENYGAQALTMELGRVARIGENDLDKLTAFDLSLRNLIAESKAEHLSKPCIKYRVSRTIVRLHEDFDFMFDDNVENFTSFVHGEVFGHDGDKPLMAKNDNEAVVFPNRHVAIGQRAALMVCEVKTRYEDGELVYD</sequence>
<reference key="1">
    <citation type="submission" date="2007-08" db="EMBL/GenBank/DDBJ databases">
        <authorList>
            <consortium name="The Vibrio harveyi Genome Sequencing Project"/>
            <person name="Bassler B."/>
            <person name="Clifton S.W."/>
            <person name="Fulton L."/>
            <person name="Delehaunty K."/>
            <person name="Fronick C."/>
            <person name="Harrison M."/>
            <person name="Markivic C."/>
            <person name="Fulton R."/>
            <person name="Tin-Wollam A.-M."/>
            <person name="Shah N."/>
            <person name="Pepin K."/>
            <person name="Nash W."/>
            <person name="Thiruvilangam P."/>
            <person name="Bhonagiri V."/>
            <person name="Waters C."/>
            <person name="Tu K.C."/>
            <person name="Irgon J."/>
            <person name="Wilson R.K."/>
        </authorList>
    </citation>
    <scope>NUCLEOTIDE SEQUENCE [LARGE SCALE GENOMIC DNA]</scope>
    <source>
        <strain>ATCC BAA-1116 / BB120</strain>
    </source>
</reference>
<name>ASTE_VIBC1</name>
<dbReference type="EC" id="3.5.1.96" evidence="1"/>
<dbReference type="EMBL" id="CP000789">
    <property type="protein sequence ID" value="ABU71096.1"/>
    <property type="molecule type" value="Genomic_DNA"/>
</dbReference>
<dbReference type="RefSeq" id="WP_012127853.1">
    <property type="nucleotide sequence ID" value="NC_009783.1"/>
</dbReference>
<dbReference type="SMR" id="A7MVW7"/>
<dbReference type="KEGG" id="vha:VIBHAR_02131"/>
<dbReference type="PATRIC" id="fig|338187.25.peg.561"/>
<dbReference type="UniPathway" id="UPA00185">
    <property type="reaction ID" value="UER00283"/>
</dbReference>
<dbReference type="Proteomes" id="UP000008152">
    <property type="component" value="Chromosome I"/>
</dbReference>
<dbReference type="GO" id="GO:0016788">
    <property type="term" value="F:hydrolase activity, acting on ester bonds"/>
    <property type="evidence" value="ECO:0007669"/>
    <property type="project" value="UniProtKB-UniRule"/>
</dbReference>
<dbReference type="GO" id="GO:0009017">
    <property type="term" value="F:succinylglutamate desuccinylase activity"/>
    <property type="evidence" value="ECO:0007669"/>
    <property type="project" value="UniProtKB-EC"/>
</dbReference>
<dbReference type="GO" id="GO:0008270">
    <property type="term" value="F:zinc ion binding"/>
    <property type="evidence" value="ECO:0007669"/>
    <property type="project" value="UniProtKB-UniRule"/>
</dbReference>
<dbReference type="GO" id="GO:0019544">
    <property type="term" value="P:arginine catabolic process to glutamate"/>
    <property type="evidence" value="ECO:0007669"/>
    <property type="project" value="UniProtKB-UniRule"/>
</dbReference>
<dbReference type="GO" id="GO:0019545">
    <property type="term" value="P:arginine catabolic process to succinate"/>
    <property type="evidence" value="ECO:0007669"/>
    <property type="project" value="UniProtKB-UniRule"/>
</dbReference>
<dbReference type="CDD" id="cd03855">
    <property type="entry name" value="M14_ASTE"/>
    <property type="match status" value="1"/>
</dbReference>
<dbReference type="Gene3D" id="3.40.630.10">
    <property type="entry name" value="Zn peptidases"/>
    <property type="match status" value="1"/>
</dbReference>
<dbReference type="HAMAP" id="MF_00767">
    <property type="entry name" value="Arg_catab_AstE"/>
    <property type="match status" value="1"/>
</dbReference>
<dbReference type="InterPro" id="IPR050178">
    <property type="entry name" value="AspA/AstE_fam"/>
</dbReference>
<dbReference type="InterPro" id="IPR055438">
    <property type="entry name" value="AstE_AspA_cat"/>
</dbReference>
<dbReference type="InterPro" id="IPR007036">
    <property type="entry name" value="Aste_AspA_hybrid_dom"/>
</dbReference>
<dbReference type="InterPro" id="IPR016681">
    <property type="entry name" value="SuccinylGlu_desuccinylase"/>
</dbReference>
<dbReference type="NCBIfam" id="NF003706">
    <property type="entry name" value="PRK05324.1"/>
    <property type="match status" value="1"/>
</dbReference>
<dbReference type="PANTHER" id="PTHR15162">
    <property type="entry name" value="ASPARTOACYLASE"/>
    <property type="match status" value="1"/>
</dbReference>
<dbReference type="PANTHER" id="PTHR15162:SF7">
    <property type="entry name" value="SUCCINYLGLUTAMATE DESUCCINYLASE"/>
    <property type="match status" value="1"/>
</dbReference>
<dbReference type="Pfam" id="PF24827">
    <property type="entry name" value="AstE_AspA_cat"/>
    <property type="match status" value="1"/>
</dbReference>
<dbReference type="Pfam" id="PF04952">
    <property type="entry name" value="AstE_AspA_hybrid"/>
    <property type="match status" value="1"/>
</dbReference>
<dbReference type="PIRSF" id="PIRSF017020">
    <property type="entry name" value="AstE"/>
    <property type="match status" value="1"/>
</dbReference>
<dbReference type="SUPFAM" id="SSF53187">
    <property type="entry name" value="Zn-dependent exopeptidases"/>
    <property type="match status" value="1"/>
</dbReference>
<keyword id="KW-0056">Arginine metabolism</keyword>
<keyword id="KW-0378">Hydrolase</keyword>
<keyword id="KW-0479">Metal-binding</keyword>
<keyword id="KW-0862">Zinc</keyword>
<organism>
    <name type="scientific">Vibrio campbellii (strain ATCC BAA-1116)</name>
    <dbReference type="NCBI Taxonomy" id="2902295"/>
    <lineage>
        <taxon>Bacteria</taxon>
        <taxon>Pseudomonadati</taxon>
        <taxon>Pseudomonadota</taxon>
        <taxon>Gammaproteobacteria</taxon>
        <taxon>Vibrionales</taxon>
        <taxon>Vibrionaceae</taxon>
        <taxon>Vibrio</taxon>
    </lineage>
</organism>
<evidence type="ECO:0000255" key="1">
    <source>
        <dbReference type="HAMAP-Rule" id="MF_00767"/>
    </source>
</evidence>
<feature type="chain" id="PRO_1000017333" description="Succinylglutamate desuccinylase">
    <location>
        <begin position="1"/>
        <end position="342"/>
    </location>
</feature>
<feature type="active site" evidence="1">
    <location>
        <position position="219"/>
    </location>
</feature>
<feature type="binding site" evidence="1">
    <location>
        <position position="63"/>
    </location>
    <ligand>
        <name>Zn(2+)</name>
        <dbReference type="ChEBI" id="CHEBI:29105"/>
    </ligand>
</feature>
<feature type="binding site" evidence="1">
    <location>
        <position position="66"/>
    </location>
    <ligand>
        <name>Zn(2+)</name>
        <dbReference type="ChEBI" id="CHEBI:29105"/>
    </ligand>
</feature>
<feature type="binding site" evidence="1">
    <location>
        <position position="155"/>
    </location>
    <ligand>
        <name>Zn(2+)</name>
        <dbReference type="ChEBI" id="CHEBI:29105"/>
    </ligand>
</feature>
<comment type="function">
    <text evidence="1">Transforms N(2)-succinylglutamate into succinate and glutamate.</text>
</comment>
<comment type="catalytic activity">
    <reaction evidence="1">
        <text>N-succinyl-L-glutamate + H2O = L-glutamate + succinate</text>
        <dbReference type="Rhea" id="RHEA:15169"/>
        <dbReference type="ChEBI" id="CHEBI:15377"/>
        <dbReference type="ChEBI" id="CHEBI:29985"/>
        <dbReference type="ChEBI" id="CHEBI:30031"/>
        <dbReference type="ChEBI" id="CHEBI:58763"/>
        <dbReference type="EC" id="3.5.1.96"/>
    </reaction>
</comment>
<comment type="cofactor">
    <cofactor evidence="1">
        <name>Zn(2+)</name>
        <dbReference type="ChEBI" id="CHEBI:29105"/>
    </cofactor>
    <text evidence="1">Binds 1 zinc ion per subunit.</text>
</comment>
<comment type="pathway">
    <text evidence="1">Amino-acid degradation; L-arginine degradation via AST pathway; L-glutamate and succinate from L-arginine: step 5/5.</text>
</comment>
<comment type="similarity">
    <text evidence="1">Belongs to the AspA/AstE family. Succinylglutamate desuccinylase subfamily.</text>
</comment>
<protein>
    <recommendedName>
        <fullName evidence="1">Succinylglutamate desuccinylase</fullName>
        <ecNumber evidence="1">3.5.1.96</ecNumber>
    </recommendedName>
</protein>